<dbReference type="EMBL" id="AY028381">
    <property type="protein sequence ID" value="AAK16995.2"/>
    <property type="molecule type" value="Genomic_DNA"/>
</dbReference>
<dbReference type="SMR" id="Q9AEU2"/>
<dbReference type="CAZy" id="GT8">
    <property type="family name" value="Glycosyltransferase Family 8"/>
</dbReference>
<dbReference type="GO" id="GO:0016757">
    <property type="term" value="F:glycosyltransferase activity"/>
    <property type="evidence" value="ECO:0007669"/>
    <property type="project" value="UniProtKB-KW"/>
</dbReference>
<dbReference type="GO" id="GO:0046872">
    <property type="term" value="F:metal ion binding"/>
    <property type="evidence" value="ECO:0007669"/>
    <property type="project" value="UniProtKB-KW"/>
</dbReference>
<dbReference type="GO" id="GO:0000166">
    <property type="term" value="F:nucleotide binding"/>
    <property type="evidence" value="ECO:0007669"/>
    <property type="project" value="UniProtKB-KW"/>
</dbReference>
<dbReference type="CDD" id="cd04194">
    <property type="entry name" value="GT8_A4GalT_like"/>
    <property type="match status" value="1"/>
</dbReference>
<dbReference type="Gene3D" id="3.90.550.10">
    <property type="entry name" value="Spore Coat Polysaccharide Biosynthesis Protein SpsA, Chain A"/>
    <property type="match status" value="1"/>
</dbReference>
<dbReference type="InterPro" id="IPR002495">
    <property type="entry name" value="Glyco_trans_8"/>
</dbReference>
<dbReference type="InterPro" id="IPR050587">
    <property type="entry name" value="GNT1/Glycosyltrans_8"/>
</dbReference>
<dbReference type="InterPro" id="IPR014869">
    <property type="entry name" value="GT-D"/>
</dbReference>
<dbReference type="InterPro" id="IPR029044">
    <property type="entry name" value="Nucleotide-diphossugar_trans"/>
</dbReference>
<dbReference type="NCBIfam" id="TIGR03728">
    <property type="entry name" value="glyco_access_1"/>
    <property type="match status" value="1"/>
</dbReference>
<dbReference type="PANTHER" id="PTHR11183">
    <property type="entry name" value="GLYCOGENIN SUBFAMILY MEMBER"/>
    <property type="match status" value="1"/>
</dbReference>
<dbReference type="Pfam" id="PF01501">
    <property type="entry name" value="Glyco_transf_8"/>
    <property type="match status" value="1"/>
</dbReference>
<dbReference type="Pfam" id="PF08759">
    <property type="entry name" value="GT-D"/>
    <property type="match status" value="1"/>
</dbReference>
<dbReference type="SUPFAM" id="SSF53448">
    <property type="entry name" value="Nucleotide-diphospho-sugar transferases"/>
    <property type="match status" value="1"/>
</dbReference>
<reference key="1">
    <citation type="journal article" date="2002" name="Mol. Microbiol.">
        <title>An accessory sec locus of Streptococcus gordonii is required for export of the surface protein GspB and for normal levels of binding to human platelets.</title>
        <authorList>
            <person name="Bensing B.A."/>
            <person name="Sullam P.M."/>
        </authorList>
    </citation>
    <scope>NUCLEOTIDE SEQUENCE [GENOMIC DNA]</scope>
    <source>
        <strain>M99</strain>
    </source>
</reference>
<reference key="2">
    <citation type="journal article" date="2004" name="Mol. Microbiol.">
        <title>Genes in the accessory sec locus of Streptococcus gordonii have three functionally distinct effects on the expression of the platelet-binding protein GspB.</title>
        <authorList>
            <person name="Takamatsu D."/>
            <person name="Bensing B.A."/>
            <person name="Sullam P.M."/>
        </authorList>
    </citation>
    <scope>FUNCTION</scope>
    <scope>DISRUPTION PHENOTYPE</scope>
    <source>
        <strain>M99</strain>
    </source>
</reference>
<reference key="3">
    <citation type="journal article" date="2004" name="J. Bacteriol.">
        <title>Four proteins encoded in the gspB-secY2A2 operon of Streptococcus gordonii mediate the intracellular glycosylation of the platelet-binding protein GspB.</title>
        <authorList>
            <person name="Takamatsu D."/>
            <person name="Bensing B.A."/>
            <person name="Sullam P.M."/>
        </authorList>
    </citation>
    <scope>FUNCTION</scope>
    <scope>DISRUPTION PHENOTYPE</scope>
    <source>
        <strain>M99</strain>
    </source>
</reference>
<feature type="chain" id="PRO_0000414594" description="Probable glycosyl transferase Gly">
    <location>
        <begin position="1"/>
        <end position="682"/>
    </location>
</feature>
<feature type="binding site" evidence="1">
    <location>
        <begin position="21"/>
        <end position="26"/>
    </location>
    <ligand>
        <name>UDP</name>
        <dbReference type="ChEBI" id="CHEBI:58223"/>
    </ligand>
</feature>
<feature type="binding site" evidence="1">
    <location>
        <begin position="112"/>
        <end position="113"/>
    </location>
    <ligand>
        <name>UDP</name>
        <dbReference type="ChEBI" id="CHEBI:58223"/>
    </ligand>
</feature>
<feature type="binding site" evidence="1">
    <location>
        <position position="112"/>
    </location>
    <ligand>
        <name>Mn(2+)</name>
        <dbReference type="ChEBI" id="CHEBI:29035"/>
    </ligand>
</feature>
<feature type="binding site" evidence="1">
    <location>
        <position position="114"/>
    </location>
    <ligand>
        <name>Mn(2+)</name>
        <dbReference type="ChEBI" id="CHEBI:29035"/>
    </ligand>
</feature>
<feature type="binding site" evidence="1">
    <location>
        <begin position="230"/>
        <end position="236"/>
    </location>
    <ligand>
        <name>UDP</name>
        <dbReference type="ChEBI" id="CHEBI:58223"/>
    </ligand>
</feature>
<feature type="binding site" evidence="1">
    <location>
        <position position="230"/>
    </location>
    <ligand>
        <name>Mn(2+)</name>
        <dbReference type="ChEBI" id="CHEBI:29035"/>
    </ligand>
</feature>
<gene>
    <name type="primary">gly</name>
</gene>
<proteinExistence type="inferred from homology"/>
<evidence type="ECO:0000250" key="1">
    <source>
        <dbReference type="UniProtKB" id="A0A0H2URJ6"/>
    </source>
</evidence>
<evidence type="ECO:0000269" key="2">
    <source>
    </source>
</evidence>
<evidence type="ECO:0000269" key="3">
    <source>
    </source>
</evidence>
<evidence type="ECO:0000305" key="4"/>
<name>GLY_STRGN</name>
<protein>
    <recommendedName>
        <fullName>Probable glycosyl transferase Gly</fullName>
    </recommendedName>
</protein>
<sequence length="682" mass="77881">MDKLENKSMANYDEYRAVVICASFSDCNQVLTTIKSIVCHNRFIKFYVINNDFPTEWFVSMQKKLAKLDCPIVNARVDASLVSNFKTDISYTVFLRYFVADFVEEEQALYLDCDIVVTRDLSEIFAVDLGSHPLVAVRDLGGEVYFGEQIFNSGVLLINVNYWRENDIAGQLIEMTDNLHDKVTQDDQSILNMFFENRWVELPFPYNCITLHTTFSDYEPEKGLYPPVIHYLPERKPWKEYTQSIYREVWWFYQGLDWSDIQEPVGALTQKMVEGEDDSSLSCLVYTYSCDLLHINYLIQALPSCHFYIAAPVVVAEPITRLLQYPNVSVSSDIAGIPALLESLEAKSQLLLDINAGDEVGDIIARFKSSGKPVFAFDSTVHGQQGQEVFPADNPEVMVQAIEKLGLAEPEERQISVLSIDQSLDYLLEKGASVVRFGDGEMDLIAGRGIPYQEYDPELSARLREMMAMESNERLMICLSDVFTGLERYSIDAQNFWKAHLQHHLADYLEICRAPWYGSTFISRPYIDLEDKTPSAGYFAKLKQLWQDKDLLIVEGLTSRSGVGNDLFDGARSIKRIICPSRNAYSKLEAIKQAVREHADNRLILTMLGPTAKVLVYDLVQEGYRALDIGHIDSEYEWFQMGASHKIKLSHKHTAEHNFDQDIEYRDDQAYDSQIVANLAQE</sequence>
<keyword id="KW-0328">Glycosyltransferase</keyword>
<keyword id="KW-0464">Manganese</keyword>
<keyword id="KW-0479">Metal-binding</keyword>
<keyword id="KW-0547">Nucleotide-binding</keyword>
<keyword id="KW-0808">Transferase</keyword>
<organism>
    <name type="scientific">Streptococcus gordonii</name>
    <dbReference type="NCBI Taxonomy" id="1302"/>
    <lineage>
        <taxon>Bacteria</taxon>
        <taxon>Bacillati</taxon>
        <taxon>Bacillota</taxon>
        <taxon>Bacilli</taxon>
        <taxon>Lactobacillales</taxon>
        <taxon>Streptococcaceae</taxon>
        <taxon>Streptococcus</taxon>
    </lineage>
</organism>
<comment type="function">
    <text evidence="2 3">Part of the accessory SecA2/SecY2 system specifically required to export GspB, a serine-rich repeat cell wall protein encoded upstream in the same operon.</text>
</comment>
<comment type="subunit">
    <text>Part of the accessory SecA2/SecY2 protein translocation apparatus required to export cell wall protein GspB.</text>
</comment>
<comment type="disruption phenotype">
    <text evidence="2 3">Alters carbohydrate composition of cell wall protein GspB, about 20% reduction in platelet binding by whole cells.</text>
</comment>
<comment type="similarity">
    <text evidence="4">Belongs to the glycosyltransferase 8 family.</text>
</comment>
<accession>Q9AEU2</accession>